<keyword id="KW-1185">Reference proteome</keyword>
<keyword id="KW-0687">Ribonucleoprotein</keyword>
<keyword id="KW-0689">Ribosomal protein</keyword>
<reference key="1">
    <citation type="journal article" date="2003" name="Science">
        <title>A genomic view of the human-Bacteroides thetaiotaomicron symbiosis.</title>
        <authorList>
            <person name="Xu J."/>
            <person name="Bjursell M.K."/>
            <person name="Himrod J."/>
            <person name="Deng S."/>
            <person name="Carmichael L.K."/>
            <person name="Chiang H.C."/>
            <person name="Hooper L.V."/>
            <person name="Gordon J.I."/>
        </authorList>
    </citation>
    <scope>NUCLEOTIDE SEQUENCE [LARGE SCALE GENOMIC DNA]</scope>
    <source>
        <strain>ATCC 29148 / DSM 2079 / JCM 5827 / CCUG 10774 / NCTC 10582 / VPI-5482 / E50</strain>
    </source>
</reference>
<gene>
    <name evidence="1" type="primary">rpsB</name>
    <name type="ordered locus">BT_3877</name>
</gene>
<feature type="chain" id="PRO_0000134132" description="Small ribosomal subunit protein uS2">
    <location>
        <begin position="1"/>
        <end position="278"/>
    </location>
</feature>
<feature type="region of interest" description="Disordered" evidence="2">
    <location>
        <begin position="233"/>
        <end position="257"/>
    </location>
</feature>
<organism>
    <name type="scientific">Bacteroides thetaiotaomicron (strain ATCC 29148 / DSM 2079 / JCM 5827 / CCUG 10774 / NCTC 10582 / VPI-5482 / E50)</name>
    <dbReference type="NCBI Taxonomy" id="226186"/>
    <lineage>
        <taxon>Bacteria</taxon>
        <taxon>Pseudomonadati</taxon>
        <taxon>Bacteroidota</taxon>
        <taxon>Bacteroidia</taxon>
        <taxon>Bacteroidales</taxon>
        <taxon>Bacteroidaceae</taxon>
        <taxon>Bacteroides</taxon>
    </lineage>
</organism>
<protein>
    <recommendedName>
        <fullName evidence="1">Small ribosomal subunit protein uS2</fullName>
    </recommendedName>
    <alternativeName>
        <fullName evidence="3">30S ribosomal protein S2</fullName>
    </alternativeName>
</protein>
<dbReference type="EMBL" id="AE015928">
    <property type="protein sequence ID" value="AAO78982.1"/>
    <property type="molecule type" value="Genomic_DNA"/>
</dbReference>
<dbReference type="RefSeq" id="NP_812788.1">
    <property type="nucleotide sequence ID" value="NC_004663.1"/>
</dbReference>
<dbReference type="RefSeq" id="WP_008760802.1">
    <property type="nucleotide sequence ID" value="NZ_UYXG01000011.1"/>
</dbReference>
<dbReference type="SMR" id="Q8A0Z4"/>
<dbReference type="FunCoup" id="Q8A0Z4">
    <property type="interactions" value="668"/>
</dbReference>
<dbReference type="STRING" id="226186.BT_3877"/>
<dbReference type="PaxDb" id="226186-BT_3877"/>
<dbReference type="EnsemblBacteria" id="AAO78982">
    <property type="protein sequence ID" value="AAO78982"/>
    <property type="gene ID" value="BT_3877"/>
</dbReference>
<dbReference type="GeneID" id="69588649"/>
<dbReference type="KEGG" id="bth:BT_3877"/>
<dbReference type="PATRIC" id="fig|226186.12.peg.3941"/>
<dbReference type="eggNOG" id="COG0052">
    <property type="taxonomic scope" value="Bacteria"/>
</dbReference>
<dbReference type="HOGENOM" id="CLU_040318_0_2_10"/>
<dbReference type="InParanoid" id="Q8A0Z4"/>
<dbReference type="OrthoDB" id="9808036at2"/>
<dbReference type="Proteomes" id="UP000001414">
    <property type="component" value="Chromosome"/>
</dbReference>
<dbReference type="GO" id="GO:0022627">
    <property type="term" value="C:cytosolic small ribosomal subunit"/>
    <property type="evidence" value="ECO:0000318"/>
    <property type="project" value="GO_Central"/>
</dbReference>
<dbReference type="GO" id="GO:0003735">
    <property type="term" value="F:structural constituent of ribosome"/>
    <property type="evidence" value="ECO:0000318"/>
    <property type="project" value="GO_Central"/>
</dbReference>
<dbReference type="GO" id="GO:0006412">
    <property type="term" value="P:translation"/>
    <property type="evidence" value="ECO:0007669"/>
    <property type="project" value="UniProtKB-UniRule"/>
</dbReference>
<dbReference type="CDD" id="cd01425">
    <property type="entry name" value="RPS2"/>
    <property type="match status" value="1"/>
</dbReference>
<dbReference type="FunFam" id="1.10.287.610:FF:000001">
    <property type="entry name" value="30S ribosomal protein S2"/>
    <property type="match status" value="1"/>
</dbReference>
<dbReference type="Gene3D" id="3.40.50.10490">
    <property type="entry name" value="Glucose-6-phosphate isomerase like protein, domain 1"/>
    <property type="match status" value="1"/>
</dbReference>
<dbReference type="Gene3D" id="1.10.287.610">
    <property type="entry name" value="Helix hairpin bin"/>
    <property type="match status" value="1"/>
</dbReference>
<dbReference type="HAMAP" id="MF_00291_B">
    <property type="entry name" value="Ribosomal_uS2_B"/>
    <property type="match status" value="1"/>
</dbReference>
<dbReference type="InterPro" id="IPR001865">
    <property type="entry name" value="Ribosomal_uS2"/>
</dbReference>
<dbReference type="InterPro" id="IPR005706">
    <property type="entry name" value="Ribosomal_uS2_bac/mit/plastid"/>
</dbReference>
<dbReference type="InterPro" id="IPR018130">
    <property type="entry name" value="Ribosomal_uS2_CS"/>
</dbReference>
<dbReference type="InterPro" id="IPR023591">
    <property type="entry name" value="Ribosomal_uS2_flav_dom_sf"/>
</dbReference>
<dbReference type="NCBIfam" id="TIGR01011">
    <property type="entry name" value="rpsB_bact"/>
    <property type="match status" value="1"/>
</dbReference>
<dbReference type="PANTHER" id="PTHR12534">
    <property type="entry name" value="30S RIBOSOMAL PROTEIN S2 PROKARYOTIC AND ORGANELLAR"/>
    <property type="match status" value="1"/>
</dbReference>
<dbReference type="PANTHER" id="PTHR12534:SF0">
    <property type="entry name" value="SMALL RIBOSOMAL SUBUNIT PROTEIN US2M"/>
    <property type="match status" value="1"/>
</dbReference>
<dbReference type="Pfam" id="PF00318">
    <property type="entry name" value="Ribosomal_S2"/>
    <property type="match status" value="1"/>
</dbReference>
<dbReference type="PRINTS" id="PR00395">
    <property type="entry name" value="RIBOSOMALS2"/>
</dbReference>
<dbReference type="SUPFAM" id="SSF52313">
    <property type="entry name" value="Ribosomal protein S2"/>
    <property type="match status" value="1"/>
</dbReference>
<dbReference type="PROSITE" id="PS00963">
    <property type="entry name" value="RIBOSOMAL_S2_2"/>
    <property type="match status" value="1"/>
</dbReference>
<evidence type="ECO:0000255" key="1">
    <source>
        <dbReference type="HAMAP-Rule" id="MF_00291"/>
    </source>
</evidence>
<evidence type="ECO:0000256" key="2">
    <source>
        <dbReference type="SAM" id="MobiDB-lite"/>
    </source>
</evidence>
<evidence type="ECO:0000305" key="3"/>
<accession>Q8A0Z4</accession>
<name>RS2_BACTN</name>
<sequence length="278" mass="30595">MSRTNFDTLLEAGCHFGHLKRKWNPAMAPYIFMERNGIHIIDLHKTVAKVDEAAEALKQIAKSGKKVLFVATKKQAKQVVAEKAQSVNMPYVIERWPGGMLTNFPTIRKAVKKMATIDKLTNDGTYSNLSKREVLQISRQRAKLDKTLGSIADLTRLPSALFVIDVMKENIAVREANRLGIPVFGIVDTNSDPTNVDFVIPANDDATKSVEVILDACCAAMIEGLEERKAEKIDMEAAGEAPANKGKKKSVKARLDKSDEEAINAAKAAAFIKEDEEA</sequence>
<proteinExistence type="inferred from homology"/>
<comment type="similarity">
    <text evidence="1">Belongs to the universal ribosomal protein uS2 family.</text>
</comment>